<protein>
    <recommendedName>
        <fullName>Metal ABC transporter substrate-binding lipoprotein</fullName>
    </recommendedName>
</protein>
<feature type="signal peptide" evidence="2">
    <location>
        <begin position="1"/>
        <end position="23"/>
    </location>
</feature>
<feature type="chain" id="PRO_0000031883" description="Metal ABC transporter substrate-binding lipoprotein">
    <location>
        <begin position="24"/>
        <end position="313"/>
    </location>
</feature>
<feature type="binding site" evidence="1">
    <location>
        <position position="71"/>
    </location>
    <ligand>
        <name>Zn(2+)</name>
        <dbReference type="ChEBI" id="CHEBI:29105"/>
    </ligand>
</feature>
<feature type="binding site" evidence="1">
    <location>
        <position position="143"/>
    </location>
    <ligand>
        <name>Zn(2+)</name>
        <dbReference type="ChEBI" id="CHEBI:29105"/>
    </ligand>
</feature>
<feature type="binding site" evidence="1">
    <location>
        <position position="209"/>
    </location>
    <ligand>
        <name>Zn(2+)</name>
        <dbReference type="ChEBI" id="CHEBI:29105"/>
    </ligand>
</feature>
<feature type="binding site" evidence="1">
    <location>
        <position position="284"/>
    </location>
    <ligand>
        <name>Zn(2+)</name>
        <dbReference type="ChEBI" id="CHEBI:29105"/>
    </ligand>
</feature>
<feature type="lipid moiety-binding region" description="N-palmitoyl cysteine" evidence="2">
    <location>
        <position position="24"/>
    </location>
</feature>
<feature type="lipid moiety-binding region" description="S-diacylglycerol cysteine" evidence="2">
    <location>
        <position position="24"/>
    </location>
</feature>
<comment type="function">
    <text>Part of an ATP-driven transport system for a metal; probably for manganese.</text>
</comment>
<comment type="subcellular location">
    <subcellularLocation>
        <location evidence="2">Cell membrane</location>
        <topology evidence="2">Lipid-anchor</topology>
    </subcellularLocation>
</comment>
<comment type="similarity">
    <text evidence="3">Belongs to the bacterial solute-binding protein 9 family. Lipoprotein receptor antigen (Lrai) subfamily.</text>
</comment>
<organism>
    <name type="scientific">Lactococcus lactis subsp. lactis (strain IL1403)</name>
    <name type="common">Streptococcus lactis</name>
    <dbReference type="NCBI Taxonomy" id="272623"/>
    <lineage>
        <taxon>Bacteria</taxon>
        <taxon>Bacillati</taxon>
        <taxon>Bacillota</taxon>
        <taxon>Bacilli</taxon>
        <taxon>Lactobacillales</taxon>
        <taxon>Streptococcaceae</taxon>
        <taxon>Lactococcus</taxon>
    </lineage>
</organism>
<accession>Q9CFZ5</accession>
<reference key="1">
    <citation type="journal article" date="2001" name="Genome Res.">
        <title>The complete genome sequence of the lactic acid bacterium Lactococcus lactis ssp. lactis IL1403.</title>
        <authorList>
            <person name="Bolotin A."/>
            <person name="Wincker P."/>
            <person name="Mauger S."/>
            <person name="Jaillon O."/>
            <person name="Malarme K."/>
            <person name="Weissenbach J."/>
            <person name="Ehrlich S.D."/>
            <person name="Sorokin A."/>
        </authorList>
    </citation>
    <scope>NUCLEOTIDE SEQUENCE [LARGE SCALE GENOMIC DNA]</scope>
    <source>
        <strain>IL1403</strain>
    </source>
</reference>
<sequence>MIEKYKNILITFIALAAIVFLVGCSNKKTDQVTDKKINVVVTNSILADITKNIADDKINLHSIVPVGKDPHEYEPLPVDVQKTSKADLIFYNGLNLETGGNAWFTKLVNNANKKENIDYFPVSTGVEVIYLEGKNTEGKEDPHAWLNLENGIIYAKNIEQQLSKKDPVNKDFYKHNLDKYVKKLSDLDQQAKSKFSLIPENEKMIVTSEGCFKYFSKAYNIPSAYIWEINTEEEGTPDQIKNLVRKLRATELKSLFVESSVDNRPMKTVSKDTGIPIYSTIFTDSVAKKGENGDSYYSMMKWNLDQIYKGLAK</sequence>
<dbReference type="EMBL" id="AE005176">
    <property type="protein sequence ID" value="AAK05414.1"/>
    <property type="molecule type" value="Genomic_DNA"/>
</dbReference>
<dbReference type="PIR" id="D86789">
    <property type="entry name" value="D86789"/>
</dbReference>
<dbReference type="RefSeq" id="NP_267472.1">
    <property type="nucleotide sequence ID" value="NC_002662.1"/>
</dbReference>
<dbReference type="RefSeq" id="WP_010905883.1">
    <property type="nucleotide sequence ID" value="NC_002662.1"/>
</dbReference>
<dbReference type="SMR" id="Q9CFZ5"/>
<dbReference type="PaxDb" id="272623-L148957"/>
<dbReference type="EnsemblBacteria" id="AAK05414">
    <property type="protein sequence ID" value="AAK05414"/>
    <property type="gene ID" value="L148957"/>
</dbReference>
<dbReference type="KEGG" id="lla:L148957"/>
<dbReference type="PATRIC" id="fig|272623.7.peg.1420"/>
<dbReference type="eggNOG" id="COG0803">
    <property type="taxonomic scope" value="Bacteria"/>
</dbReference>
<dbReference type="HOGENOM" id="CLU_016838_1_1_9"/>
<dbReference type="OrthoDB" id="9793396at2"/>
<dbReference type="Proteomes" id="UP000002196">
    <property type="component" value="Chromosome"/>
</dbReference>
<dbReference type="GO" id="GO:0005886">
    <property type="term" value="C:plasma membrane"/>
    <property type="evidence" value="ECO:0007669"/>
    <property type="project" value="UniProtKB-SubCell"/>
</dbReference>
<dbReference type="GO" id="GO:0046872">
    <property type="term" value="F:metal ion binding"/>
    <property type="evidence" value="ECO:0007669"/>
    <property type="project" value="UniProtKB-KW"/>
</dbReference>
<dbReference type="GO" id="GO:0007155">
    <property type="term" value="P:cell adhesion"/>
    <property type="evidence" value="ECO:0007669"/>
    <property type="project" value="InterPro"/>
</dbReference>
<dbReference type="GO" id="GO:0030001">
    <property type="term" value="P:metal ion transport"/>
    <property type="evidence" value="ECO:0007669"/>
    <property type="project" value="InterPro"/>
</dbReference>
<dbReference type="CDD" id="cd01137">
    <property type="entry name" value="PsaA"/>
    <property type="match status" value="1"/>
</dbReference>
<dbReference type="Gene3D" id="3.40.50.1980">
    <property type="entry name" value="Nitrogenase molybdenum iron protein domain"/>
    <property type="match status" value="2"/>
</dbReference>
<dbReference type="InterPro" id="IPR006129">
    <property type="entry name" value="AdhesinB"/>
</dbReference>
<dbReference type="InterPro" id="IPR050492">
    <property type="entry name" value="Bact_metal-bind_prot9"/>
</dbReference>
<dbReference type="InterPro" id="IPR006128">
    <property type="entry name" value="Lipoprotein_PsaA-like"/>
</dbReference>
<dbReference type="InterPro" id="IPR006127">
    <property type="entry name" value="ZnuA-like"/>
</dbReference>
<dbReference type="NCBIfam" id="NF040928">
    <property type="entry name" value="ABC_lipo_SloC"/>
    <property type="match status" value="1"/>
</dbReference>
<dbReference type="PANTHER" id="PTHR42953">
    <property type="entry name" value="HIGH-AFFINITY ZINC UPTAKE SYSTEM PROTEIN ZNUA-RELATED"/>
    <property type="match status" value="1"/>
</dbReference>
<dbReference type="PANTHER" id="PTHR42953:SF1">
    <property type="entry name" value="METAL-BINDING PROTEIN HI_0362-RELATED"/>
    <property type="match status" value="1"/>
</dbReference>
<dbReference type="Pfam" id="PF01297">
    <property type="entry name" value="ZnuA"/>
    <property type="match status" value="1"/>
</dbReference>
<dbReference type="PRINTS" id="PR00691">
    <property type="entry name" value="ADHESINB"/>
</dbReference>
<dbReference type="PRINTS" id="PR00690">
    <property type="entry name" value="ADHESNFAMILY"/>
</dbReference>
<dbReference type="SUPFAM" id="SSF53807">
    <property type="entry name" value="Helical backbone' metal receptor"/>
    <property type="match status" value="1"/>
</dbReference>
<dbReference type="PROSITE" id="PS51257">
    <property type="entry name" value="PROKAR_LIPOPROTEIN"/>
    <property type="match status" value="1"/>
</dbReference>
<name>MTSA_LACLA</name>
<proteinExistence type="inferred from homology"/>
<gene>
    <name type="primary">mtsA</name>
    <name type="ordered locus">LL1316</name>
    <name type="ORF">L148957</name>
</gene>
<evidence type="ECO:0000250" key="1"/>
<evidence type="ECO:0000255" key="2">
    <source>
        <dbReference type="PROSITE-ProRule" id="PRU00303"/>
    </source>
</evidence>
<evidence type="ECO:0000305" key="3"/>
<keyword id="KW-1003">Cell membrane</keyword>
<keyword id="KW-0449">Lipoprotein</keyword>
<keyword id="KW-0464">Manganese</keyword>
<keyword id="KW-0472">Membrane</keyword>
<keyword id="KW-0479">Metal-binding</keyword>
<keyword id="KW-0564">Palmitate</keyword>
<keyword id="KW-1185">Reference proteome</keyword>
<keyword id="KW-0732">Signal</keyword>
<keyword id="KW-0813">Transport</keyword>
<keyword id="KW-0862">Zinc</keyword>